<accession>Q00444</accession>
<keyword id="KW-0217">Developmental protein</keyword>
<keyword id="KW-0238">DNA-binding</keyword>
<keyword id="KW-0371">Homeobox</keyword>
<keyword id="KW-0539">Nucleus</keyword>
<keyword id="KW-1267">Proteomics identification</keyword>
<keyword id="KW-1185">Reference proteome</keyword>
<keyword id="KW-0804">Transcription</keyword>
<keyword id="KW-0805">Transcription regulation</keyword>
<comment type="function">
    <text>Sequence-specific transcription factor which is part of a developmental regulatory system that provides cells with specific positional identities on the anterior-posterior axis.</text>
</comment>
<comment type="interaction">
    <interactant intactId="EBI-11955357">
        <id>Q00444</id>
    </interactant>
    <interactant intactId="EBI-10171902">
        <id>P56545-3</id>
        <label>CTBP2</label>
    </interactant>
    <organismsDiffer>false</organismsDiffer>
    <experiments>3</experiments>
</comment>
<comment type="interaction">
    <interactant intactId="EBI-11955357">
        <id>Q00444</id>
    </interactant>
    <interactant intactId="EBI-739789">
        <id>Q92997</id>
        <label>DVL3</label>
    </interactant>
    <organismsDiffer>false</organismsDiffer>
    <experiments>3</experiments>
</comment>
<comment type="interaction">
    <interactant intactId="EBI-11955357">
        <id>Q00444</id>
    </interactant>
    <interactant intactId="EBI-739467">
        <id>Q9H8Y8</id>
        <label>GORASP2</label>
    </interactant>
    <organismsDiffer>false</organismsDiffer>
    <experiments>3</experiments>
</comment>
<comment type="interaction">
    <interactant intactId="EBI-11955357">
        <id>Q00444</id>
    </interactant>
    <interactant intactId="EBI-12039345">
        <id>Q9UBR4-2</id>
        <label>LHX3</label>
    </interactant>
    <organismsDiffer>false</organismsDiffer>
    <experiments>3</experiments>
</comment>
<comment type="interaction">
    <interactant intactId="EBI-11955357">
        <id>Q00444</id>
    </interactant>
    <interactant intactId="EBI-2865388">
        <id>Q969G2</id>
        <label>LHX4</label>
    </interactant>
    <organismsDiffer>false</organismsDiffer>
    <experiments>3</experiments>
</comment>
<comment type="interaction">
    <interactant intactId="EBI-11955357">
        <id>Q00444</id>
    </interactant>
    <interactant intactId="EBI-301611">
        <id>P40424</id>
        <label>PBX1</label>
    </interactant>
    <organismsDiffer>false</organismsDiffer>
    <experiments>3</experiments>
</comment>
<comment type="interaction">
    <interactant intactId="EBI-11955357">
        <id>Q00444</id>
    </interactant>
    <interactant intactId="EBI-348489">
        <id>P40425</id>
        <label>PBX2</label>
    </interactant>
    <organismsDiffer>false</organismsDiffer>
    <experiments>3</experiments>
</comment>
<comment type="interaction">
    <interactant intactId="EBI-11955357">
        <id>Q00444</id>
    </interactant>
    <interactant intactId="EBI-10302990">
        <id>Q9BYU1</id>
        <label>PBX4</label>
    </interactant>
    <organismsDiffer>false</organismsDiffer>
    <experiments>3</experiments>
</comment>
<comment type="interaction">
    <interactant intactId="EBI-11955357">
        <id>Q00444</id>
    </interactant>
    <interactant intactId="EBI-347928">
        <id>P62487</id>
        <label>POLR2G</label>
    </interactant>
    <organismsDiffer>false</organismsDiffer>
    <experiments>4</experiments>
</comment>
<comment type="interaction">
    <interactant intactId="EBI-11955357">
        <id>Q00444</id>
    </interactant>
    <interactant intactId="EBI-12029004">
        <id>P78424</id>
        <label>POU6F2</label>
    </interactant>
    <organismsDiffer>false</organismsDiffer>
    <experiments>3</experiments>
</comment>
<comment type="interaction">
    <interactant intactId="EBI-11955357">
        <id>Q00444</id>
    </interactant>
    <interactant intactId="EBI-711925">
        <id>Q05516</id>
        <label>ZBTB16</label>
    </interactant>
    <organismsDiffer>false</organismsDiffer>
    <experiments>3</experiments>
</comment>
<comment type="subcellular location">
    <subcellularLocation>
        <location>Nucleus</location>
    </subcellularLocation>
</comment>
<comment type="similarity">
    <text evidence="3">Belongs to the Antp homeobox family.</text>
</comment>
<organism>
    <name type="scientific">Homo sapiens</name>
    <name type="common">Human</name>
    <dbReference type="NCBI Taxonomy" id="9606"/>
    <lineage>
        <taxon>Eukaryota</taxon>
        <taxon>Metazoa</taxon>
        <taxon>Chordata</taxon>
        <taxon>Craniata</taxon>
        <taxon>Vertebrata</taxon>
        <taxon>Euteleostomi</taxon>
        <taxon>Mammalia</taxon>
        <taxon>Eutheria</taxon>
        <taxon>Euarchontoglires</taxon>
        <taxon>Primates</taxon>
        <taxon>Haplorrhini</taxon>
        <taxon>Catarrhini</taxon>
        <taxon>Hominidae</taxon>
        <taxon>Homo</taxon>
    </lineage>
</organism>
<evidence type="ECO:0000255" key="1">
    <source>
        <dbReference type="PROSITE-ProRule" id="PRU00108"/>
    </source>
</evidence>
<evidence type="ECO:0000256" key="2">
    <source>
        <dbReference type="SAM" id="MobiDB-lite"/>
    </source>
</evidence>
<evidence type="ECO:0000305" key="3"/>
<dbReference type="EMBL" id="X61755">
    <property type="protein sequence ID" value="CAA43894.1"/>
    <property type="molecule type" value="Genomic_DNA"/>
</dbReference>
<dbReference type="CCDS" id="CCDS8872.1"/>
<dbReference type="PIR" id="S20029">
    <property type="entry name" value="S20029"/>
</dbReference>
<dbReference type="RefSeq" id="NP_061826.1">
    <property type="nucleotide sequence ID" value="NM_018953.4"/>
</dbReference>
<dbReference type="SMR" id="Q00444"/>
<dbReference type="BioGRID" id="109462">
    <property type="interactions" value="97"/>
</dbReference>
<dbReference type="FunCoup" id="Q00444">
    <property type="interactions" value="1009"/>
</dbReference>
<dbReference type="IntAct" id="Q00444">
    <property type="interactions" value="44"/>
</dbReference>
<dbReference type="STRING" id="9606.ENSP00000309336"/>
<dbReference type="GlyGen" id="Q00444">
    <property type="glycosylation" value="1 site, 1 O-linked glycan (1 site)"/>
</dbReference>
<dbReference type="iPTMnet" id="Q00444"/>
<dbReference type="PhosphoSitePlus" id="Q00444"/>
<dbReference type="BioMuta" id="HOXC5"/>
<dbReference type="DMDM" id="232262"/>
<dbReference type="jPOST" id="Q00444"/>
<dbReference type="MassIVE" id="Q00444"/>
<dbReference type="PaxDb" id="9606-ENSP00000309336"/>
<dbReference type="PeptideAtlas" id="Q00444"/>
<dbReference type="ProteomicsDB" id="57847"/>
<dbReference type="Antibodypedia" id="27321">
    <property type="antibodies" value="131 antibodies from 19 providers"/>
</dbReference>
<dbReference type="DNASU" id="3222"/>
<dbReference type="Ensembl" id="ENST00000312492.3">
    <property type="protein sequence ID" value="ENSP00000309336.2"/>
    <property type="gene ID" value="ENSG00000172789.4"/>
</dbReference>
<dbReference type="GeneID" id="3222"/>
<dbReference type="KEGG" id="hsa:3222"/>
<dbReference type="MANE-Select" id="ENST00000312492.3">
    <property type="protein sequence ID" value="ENSP00000309336.2"/>
    <property type="RefSeq nucleotide sequence ID" value="NM_018953.4"/>
    <property type="RefSeq protein sequence ID" value="NP_061826.1"/>
</dbReference>
<dbReference type="UCSC" id="uc001sew.4">
    <property type="organism name" value="human"/>
</dbReference>
<dbReference type="AGR" id="HGNC:5127"/>
<dbReference type="CTD" id="3222"/>
<dbReference type="DisGeNET" id="3222"/>
<dbReference type="GeneCards" id="HOXC5"/>
<dbReference type="HGNC" id="HGNC:5127">
    <property type="gene designation" value="HOXC5"/>
</dbReference>
<dbReference type="HPA" id="ENSG00000172789">
    <property type="expression patterns" value="Tissue enhanced (fallopian)"/>
</dbReference>
<dbReference type="MIM" id="142973">
    <property type="type" value="gene"/>
</dbReference>
<dbReference type="neXtProt" id="NX_Q00444"/>
<dbReference type="OpenTargets" id="ENSG00000172789"/>
<dbReference type="PharmGKB" id="PA29402"/>
<dbReference type="VEuPathDB" id="HostDB:ENSG00000172789"/>
<dbReference type="eggNOG" id="KOG0489">
    <property type="taxonomic scope" value="Eukaryota"/>
</dbReference>
<dbReference type="GeneTree" id="ENSGT00940000161023"/>
<dbReference type="HOGENOM" id="CLU_061398_2_1_1"/>
<dbReference type="InParanoid" id="Q00444"/>
<dbReference type="OMA" id="AYTMQSY"/>
<dbReference type="OrthoDB" id="6159439at2759"/>
<dbReference type="PAN-GO" id="Q00444">
    <property type="GO annotations" value="5 GO annotations based on evolutionary models"/>
</dbReference>
<dbReference type="PhylomeDB" id="Q00444"/>
<dbReference type="TreeFam" id="TF316310"/>
<dbReference type="BRENDA" id="2.7.11.21">
    <property type="organism ID" value="2681"/>
</dbReference>
<dbReference type="PathwayCommons" id="Q00444"/>
<dbReference type="SignaLink" id="Q00444"/>
<dbReference type="BioGRID-ORCS" id="3222">
    <property type="hits" value="27 hits in 1169 CRISPR screens"/>
</dbReference>
<dbReference type="GeneWiki" id="HOXC5"/>
<dbReference type="GenomeRNAi" id="3222"/>
<dbReference type="Pharos" id="Q00444">
    <property type="development level" value="Tbio"/>
</dbReference>
<dbReference type="PRO" id="PR:Q00444"/>
<dbReference type="Proteomes" id="UP000005640">
    <property type="component" value="Chromosome 12"/>
</dbReference>
<dbReference type="RNAct" id="Q00444">
    <property type="molecule type" value="protein"/>
</dbReference>
<dbReference type="Bgee" id="ENSG00000172789">
    <property type="expression patterns" value="Expressed in primordial germ cell in gonad and 60 other cell types or tissues"/>
</dbReference>
<dbReference type="GO" id="GO:0030054">
    <property type="term" value="C:cell junction"/>
    <property type="evidence" value="ECO:0000314"/>
    <property type="project" value="HPA"/>
</dbReference>
<dbReference type="GO" id="GO:0000785">
    <property type="term" value="C:chromatin"/>
    <property type="evidence" value="ECO:0000247"/>
    <property type="project" value="NTNU_SB"/>
</dbReference>
<dbReference type="GO" id="GO:0005654">
    <property type="term" value="C:nucleoplasm"/>
    <property type="evidence" value="ECO:0000314"/>
    <property type="project" value="HPA"/>
</dbReference>
<dbReference type="GO" id="GO:0005634">
    <property type="term" value="C:nucleus"/>
    <property type="evidence" value="ECO:0000318"/>
    <property type="project" value="GO_Central"/>
</dbReference>
<dbReference type="GO" id="GO:0003700">
    <property type="term" value="F:DNA-binding transcription factor activity"/>
    <property type="evidence" value="ECO:0000304"/>
    <property type="project" value="ProtInc"/>
</dbReference>
<dbReference type="GO" id="GO:0000981">
    <property type="term" value="F:DNA-binding transcription factor activity, RNA polymerase II-specific"/>
    <property type="evidence" value="ECO:0000247"/>
    <property type="project" value="NTNU_SB"/>
</dbReference>
<dbReference type="GO" id="GO:0000978">
    <property type="term" value="F:RNA polymerase II cis-regulatory region sequence-specific DNA binding"/>
    <property type="evidence" value="ECO:0000318"/>
    <property type="project" value="GO_Central"/>
</dbReference>
<dbReference type="GO" id="GO:0009952">
    <property type="term" value="P:anterior/posterior pattern specification"/>
    <property type="evidence" value="ECO:0000318"/>
    <property type="project" value="GO_Central"/>
</dbReference>
<dbReference type="GO" id="GO:0048706">
    <property type="term" value="P:embryonic skeletal system development"/>
    <property type="evidence" value="ECO:0007669"/>
    <property type="project" value="Ensembl"/>
</dbReference>
<dbReference type="GO" id="GO:0006357">
    <property type="term" value="P:regulation of transcription by RNA polymerase II"/>
    <property type="evidence" value="ECO:0000318"/>
    <property type="project" value="GO_Central"/>
</dbReference>
<dbReference type="CDD" id="cd00086">
    <property type="entry name" value="homeodomain"/>
    <property type="match status" value="1"/>
</dbReference>
<dbReference type="FunFam" id="1.10.10.60:FF:000055">
    <property type="entry name" value="Homeobox protein Hox-A5"/>
    <property type="match status" value="1"/>
</dbReference>
<dbReference type="Gene3D" id="1.10.10.60">
    <property type="entry name" value="Homeodomain-like"/>
    <property type="match status" value="1"/>
</dbReference>
<dbReference type="InterPro" id="IPR050609">
    <property type="entry name" value="Antp_homeobox_Deformed_sf"/>
</dbReference>
<dbReference type="InterPro" id="IPR001356">
    <property type="entry name" value="HD"/>
</dbReference>
<dbReference type="InterPro" id="IPR020479">
    <property type="entry name" value="HD_metazoa"/>
</dbReference>
<dbReference type="InterPro" id="IPR017995">
    <property type="entry name" value="Homeobox_antennapedia"/>
</dbReference>
<dbReference type="InterPro" id="IPR001827">
    <property type="entry name" value="Homeobox_Antennapedia_CS"/>
</dbReference>
<dbReference type="InterPro" id="IPR017970">
    <property type="entry name" value="Homeobox_CS"/>
</dbReference>
<dbReference type="InterPro" id="IPR009057">
    <property type="entry name" value="Homeodomain-like_sf"/>
</dbReference>
<dbReference type="PANTHER" id="PTHR45771:SF13">
    <property type="entry name" value="HOMEOBOX C5"/>
    <property type="match status" value="1"/>
</dbReference>
<dbReference type="PANTHER" id="PTHR45771">
    <property type="entry name" value="HOMEOTIC PROTEIN DEFORMED"/>
    <property type="match status" value="1"/>
</dbReference>
<dbReference type="Pfam" id="PF00046">
    <property type="entry name" value="Homeodomain"/>
    <property type="match status" value="1"/>
</dbReference>
<dbReference type="PRINTS" id="PR00025">
    <property type="entry name" value="ANTENNAPEDIA"/>
</dbReference>
<dbReference type="PRINTS" id="PR00024">
    <property type="entry name" value="HOMEOBOX"/>
</dbReference>
<dbReference type="SMART" id="SM00389">
    <property type="entry name" value="HOX"/>
    <property type="match status" value="1"/>
</dbReference>
<dbReference type="SUPFAM" id="SSF46689">
    <property type="entry name" value="Homeodomain-like"/>
    <property type="match status" value="1"/>
</dbReference>
<dbReference type="PROSITE" id="PS00032">
    <property type="entry name" value="ANTENNAPEDIA"/>
    <property type="match status" value="1"/>
</dbReference>
<dbReference type="PROSITE" id="PS00027">
    <property type="entry name" value="HOMEOBOX_1"/>
    <property type="match status" value="1"/>
</dbReference>
<dbReference type="PROSITE" id="PS50071">
    <property type="entry name" value="HOMEOBOX_2"/>
    <property type="match status" value="1"/>
</dbReference>
<gene>
    <name type="primary">HOXC5</name>
    <name type="synonym">HOX3D</name>
</gene>
<protein>
    <recommendedName>
        <fullName>Homeobox protein Hox-C5</fullName>
    </recommendedName>
    <alternativeName>
        <fullName>Homeobox protein CP11</fullName>
    </alternativeName>
    <alternativeName>
        <fullName>Homeobox protein Hox-3D</fullName>
    </alternativeName>
</protein>
<feature type="chain" id="PRO_0000200169" description="Homeobox protein Hox-C5">
    <location>
        <begin position="1"/>
        <end position="222"/>
    </location>
</feature>
<feature type="DNA-binding region" description="Homeobox" evidence="1">
    <location>
        <begin position="155"/>
        <end position="214"/>
    </location>
</feature>
<feature type="region of interest" description="Disordered" evidence="2">
    <location>
        <begin position="68"/>
        <end position="141"/>
    </location>
</feature>
<feature type="short sequence motif" description="Antp-type hexapeptide">
    <location>
        <begin position="140"/>
        <end position="145"/>
    </location>
</feature>
<feature type="compositionally biased region" description="Low complexity" evidence="2">
    <location>
        <begin position="74"/>
        <end position="85"/>
    </location>
</feature>
<feature type="compositionally biased region" description="Basic and acidic residues" evidence="2">
    <location>
        <begin position="107"/>
        <end position="122"/>
    </location>
</feature>
<reference key="1">
    <citation type="journal article" date="1992" name="EMBO J.">
        <title>The upstream region of the human homeobox gene HOX3D is a target for regulation by retinoic acid and HOX homeoproteins.</title>
        <authorList>
            <person name="Arcioni L."/>
            <person name="Simeone A."/>
            <person name="Guazzi S."/>
            <person name="Zappavigna V."/>
            <person name="Boncinelli E."/>
            <person name="Mavilio F."/>
        </authorList>
    </citation>
    <scope>NUCLEOTIDE SEQUENCE [GENOMIC DNA]</scope>
</reference>
<reference key="2">
    <citation type="journal article" date="1989" name="Genome">
        <title>Organization of human class I homeobox genes.</title>
        <authorList>
            <person name="Boncinelli E."/>
            <person name="Acampora D."/>
            <person name="Pannese M."/>
            <person name="D'Esposito M."/>
            <person name="Somma R."/>
            <person name="Gaudino G."/>
            <person name="Stornaiuolo A."/>
            <person name="Cafiero M."/>
            <person name="Faiella A."/>
            <person name="Simeone A."/>
        </authorList>
    </citation>
    <scope>NUCLEOTIDE SEQUENCE [GENOMIC DNA] OF 155-220</scope>
</reference>
<name>HXC5_HUMAN</name>
<proteinExistence type="evidence at protein level"/>
<sequence length="222" mass="24976">MSSYVANSFYKQSPNIPAYNMQTCGNYGSASEVQASRYCYGGLDLSITFPPPAPSNSLHGVDMAANPRAHPDRPACSAAAAPGHAPGRDEAAPLNPGMYSQKAARPALEERAKSSGEIKEEQAQTGQPAGLSQPPAPPQIYPWMTKLHMSHETDGKRSRTSYTRYQTLELEKEFHFNRYLTRRRRIEIANNLCLNERQIKIWFQNRRMKWKKDSKMKSKEAL</sequence>